<proteinExistence type="inferred from homology"/>
<feature type="chain" id="PRO_0000307517" description="Triosephosphate isomerase">
    <location>
        <begin position="1"/>
        <end position="252"/>
    </location>
</feature>
<feature type="active site" description="Electrophile" evidence="1">
    <location>
        <position position="96"/>
    </location>
</feature>
<feature type="active site" description="Proton acceptor" evidence="1">
    <location>
        <position position="168"/>
    </location>
</feature>
<feature type="binding site" evidence="1">
    <location>
        <begin position="10"/>
        <end position="12"/>
    </location>
    <ligand>
        <name>substrate</name>
    </ligand>
</feature>
<feature type="binding site" evidence="1">
    <location>
        <position position="174"/>
    </location>
    <ligand>
        <name>substrate</name>
    </ligand>
</feature>
<feature type="binding site" evidence="1">
    <location>
        <position position="213"/>
    </location>
    <ligand>
        <name>substrate</name>
    </ligand>
</feature>
<feature type="binding site" evidence="1">
    <location>
        <begin position="234"/>
        <end position="235"/>
    </location>
    <ligand>
        <name>substrate</name>
    </ligand>
</feature>
<keyword id="KW-0963">Cytoplasm</keyword>
<keyword id="KW-0312">Gluconeogenesis</keyword>
<keyword id="KW-0324">Glycolysis</keyword>
<keyword id="KW-0413">Isomerase</keyword>
<reference key="1">
    <citation type="journal article" date="2007" name="Environ. Microbiol.">
        <title>Whole-genome analysis of the ammonia-oxidizing bacterium, Nitrosomonas eutropha C91: implications for niche adaptation.</title>
        <authorList>
            <person name="Stein L.Y."/>
            <person name="Arp D.J."/>
            <person name="Berube P.M."/>
            <person name="Chain P.S."/>
            <person name="Hauser L."/>
            <person name="Jetten M.S."/>
            <person name="Klotz M.G."/>
            <person name="Larimer F.W."/>
            <person name="Norton J.M."/>
            <person name="Op den Camp H.J.M."/>
            <person name="Shin M."/>
            <person name="Wei X."/>
        </authorList>
    </citation>
    <scope>NUCLEOTIDE SEQUENCE [LARGE SCALE GENOMIC DNA]</scope>
    <source>
        <strain>DSM 101675 / C91 / Nm57</strain>
    </source>
</reference>
<accession>Q0AHK2</accession>
<dbReference type="EC" id="5.3.1.1" evidence="1"/>
<dbReference type="EMBL" id="CP000450">
    <property type="protein sequence ID" value="ABI59180.1"/>
    <property type="molecule type" value="Genomic_DNA"/>
</dbReference>
<dbReference type="RefSeq" id="WP_011634004.1">
    <property type="nucleotide sequence ID" value="NC_008344.1"/>
</dbReference>
<dbReference type="SMR" id="Q0AHK2"/>
<dbReference type="STRING" id="335283.Neut_0920"/>
<dbReference type="KEGG" id="net:Neut_0920"/>
<dbReference type="eggNOG" id="COG0149">
    <property type="taxonomic scope" value="Bacteria"/>
</dbReference>
<dbReference type="HOGENOM" id="CLU_024251_2_1_4"/>
<dbReference type="OrthoDB" id="9809429at2"/>
<dbReference type="UniPathway" id="UPA00109">
    <property type="reaction ID" value="UER00189"/>
</dbReference>
<dbReference type="UniPathway" id="UPA00138"/>
<dbReference type="Proteomes" id="UP000001966">
    <property type="component" value="Chromosome"/>
</dbReference>
<dbReference type="GO" id="GO:0005829">
    <property type="term" value="C:cytosol"/>
    <property type="evidence" value="ECO:0007669"/>
    <property type="project" value="TreeGrafter"/>
</dbReference>
<dbReference type="GO" id="GO:0004807">
    <property type="term" value="F:triose-phosphate isomerase activity"/>
    <property type="evidence" value="ECO:0007669"/>
    <property type="project" value="UniProtKB-UniRule"/>
</dbReference>
<dbReference type="GO" id="GO:0006094">
    <property type="term" value="P:gluconeogenesis"/>
    <property type="evidence" value="ECO:0007669"/>
    <property type="project" value="UniProtKB-UniRule"/>
</dbReference>
<dbReference type="GO" id="GO:0046166">
    <property type="term" value="P:glyceraldehyde-3-phosphate biosynthetic process"/>
    <property type="evidence" value="ECO:0007669"/>
    <property type="project" value="TreeGrafter"/>
</dbReference>
<dbReference type="GO" id="GO:0019563">
    <property type="term" value="P:glycerol catabolic process"/>
    <property type="evidence" value="ECO:0007669"/>
    <property type="project" value="TreeGrafter"/>
</dbReference>
<dbReference type="GO" id="GO:0006096">
    <property type="term" value="P:glycolytic process"/>
    <property type="evidence" value="ECO:0007669"/>
    <property type="project" value="UniProtKB-UniRule"/>
</dbReference>
<dbReference type="CDD" id="cd00311">
    <property type="entry name" value="TIM"/>
    <property type="match status" value="1"/>
</dbReference>
<dbReference type="FunFam" id="3.20.20.70:FF:000016">
    <property type="entry name" value="Triosephosphate isomerase"/>
    <property type="match status" value="1"/>
</dbReference>
<dbReference type="Gene3D" id="3.20.20.70">
    <property type="entry name" value="Aldolase class I"/>
    <property type="match status" value="1"/>
</dbReference>
<dbReference type="HAMAP" id="MF_00147_B">
    <property type="entry name" value="TIM_B"/>
    <property type="match status" value="1"/>
</dbReference>
<dbReference type="InterPro" id="IPR013785">
    <property type="entry name" value="Aldolase_TIM"/>
</dbReference>
<dbReference type="InterPro" id="IPR035990">
    <property type="entry name" value="TIM_sf"/>
</dbReference>
<dbReference type="InterPro" id="IPR022896">
    <property type="entry name" value="TrioseP_Isoase_bac/euk"/>
</dbReference>
<dbReference type="InterPro" id="IPR000652">
    <property type="entry name" value="Triosephosphate_isomerase"/>
</dbReference>
<dbReference type="InterPro" id="IPR020861">
    <property type="entry name" value="Triosephosphate_isomerase_AS"/>
</dbReference>
<dbReference type="NCBIfam" id="TIGR00419">
    <property type="entry name" value="tim"/>
    <property type="match status" value="1"/>
</dbReference>
<dbReference type="PANTHER" id="PTHR21139">
    <property type="entry name" value="TRIOSEPHOSPHATE ISOMERASE"/>
    <property type="match status" value="1"/>
</dbReference>
<dbReference type="PANTHER" id="PTHR21139:SF42">
    <property type="entry name" value="TRIOSEPHOSPHATE ISOMERASE"/>
    <property type="match status" value="1"/>
</dbReference>
<dbReference type="Pfam" id="PF00121">
    <property type="entry name" value="TIM"/>
    <property type="match status" value="1"/>
</dbReference>
<dbReference type="SUPFAM" id="SSF51351">
    <property type="entry name" value="Triosephosphate isomerase (TIM)"/>
    <property type="match status" value="1"/>
</dbReference>
<dbReference type="PROSITE" id="PS00171">
    <property type="entry name" value="TIM_1"/>
    <property type="match status" value="1"/>
</dbReference>
<dbReference type="PROSITE" id="PS51440">
    <property type="entry name" value="TIM_2"/>
    <property type="match status" value="1"/>
</dbReference>
<protein>
    <recommendedName>
        <fullName evidence="1">Triosephosphate isomerase</fullName>
        <shortName evidence="1">TIM</shortName>
        <shortName evidence="1">TPI</shortName>
        <ecNumber evidence="1">5.3.1.1</ecNumber>
    </recommendedName>
    <alternativeName>
        <fullName evidence="1">Triose-phosphate isomerase</fullName>
    </alternativeName>
</protein>
<gene>
    <name evidence="1" type="primary">tpiA</name>
    <name type="ordered locus">Neut_0920</name>
</gene>
<comment type="function">
    <text evidence="1">Involved in the gluconeogenesis. Catalyzes stereospecifically the conversion of dihydroxyacetone phosphate (DHAP) to D-glyceraldehyde-3-phosphate (G3P).</text>
</comment>
<comment type="catalytic activity">
    <reaction evidence="1">
        <text>D-glyceraldehyde 3-phosphate = dihydroxyacetone phosphate</text>
        <dbReference type="Rhea" id="RHEA:18585"/>
        <dbReference type="ChEBI" id="CHEBI:57642"/>
        <dbReference type="ChEBI" id="CHEBI:59776"/>
        <dbReference type="EC" id="5.3.1.1"/>
    </reaction>
</comment>
<comment type="pathway">
    <text evidence="1">Carbohydrate biosynthesis; gluconeogenesis.</text>
</comment>
<comment type="pathway">
    <text evidence="1">Carbohydrate degradation; glycolysis; D-glyceraldehyde 3-phosphate from glycerone phosphate: step 1/1.</text>
</comment>
<comment type="subunit">
    <text evidence="1">Homodimer.</text>
</comment>
<comment type="subcellular location">
    <subcellularLocation>
        <location evidence="1">Cytoplasm</location>
    </subcellularLocation>
</comment>
<comment type="similarity">
    <text evidence="1">Belongs to the triosephosphate isomerase family.</text>
</comment>
<sequence>MTRAGFVAGNWKMYGNLVQNQELLAAIVLGIPSLQNASCAVCVPYPYLAQAQSVLKGTHVAWGGQNISQHHQGAYTGEVSAGMLTDFGCRYVIVGHSERRTLYGEDNQMVAEKFHSAQEQSLVPILCVGETLAQREANETEQVIARQLDAVIGLVGVNAIKQSVIAYEPVWAIGTGETATPQQAQDVHAFVRNRIAAHNSEIAADIQIVYGGSVKANNASELFAMPDIDGGLIGGASLVAAEFISICFAAQS</sequence>
<name>TPIS_NITEC</name>
<evidence type="ECO:0000255" key="1">
    <source>
        <dbReference type="HAMAP-Rule" id="MF_00147"/>
    </source>
</evidence>
<organism>
    <name type="scientific">Nitrosomonas eutropha (strain DSM 101675 / C91 / Nm57)</name>
    <dbReference type="NCBI Taxonomy" id="335283"/>
    <lineage>
        <taxon>Bacteria</taxon>
        <taxon>Pseudomonadati</taxon>
        <taxon>Pseudomonadota</taxon>
        <taxon>Betaproteobacteria</taxon>
        <taxon>Nitrosomonadales</taxon>
        <taxon>Nitrosomonadaceae</taxon>
        <taxon>Nitrosomonas</taxon>
    </lineage>
</organism>